<sequence>MTKNYAYPLDLSWSTEEITSVLSFLNLVEKAYENRVEAALLLKSYQNYKTIVSSKLQEKQIDRNFERVSGYSTYRAVQAAKAKEKGFISLEN</sequence>
<dbReference type="EMBL" id="AE014133">
    <property type="protein sequence ID" value="AAN58833.1"/>
    <property type="molecule type" value="Genomic_DNA"/>
</dbReference>
<dbReference type="RefSeq" id="NP_721527.1">
    <property type="nucleotide sequence ID" value="NC_004350.2"/>
</dbReference>
<dbReference type="RefSeq" id="WP_002279684.1">
    <property type="nucleotide sequence ID" value="NC_004350.2"/>
</dbReference>
<dbReference type="SMR" id="P59154"/>
<dbReference type="STRING" id="210007.SMU_1141c"/>
<dbReference type="KEGG" id="smu:SMU_1141c"/>
<dbReference type="PATRIC" id="fig|210007.7.peg.1023"/>
<dbReference type="eggNOG" id="COG4476">
    <property type="taxonomic scope" value="Bacteria"/>
</dbReference>
<dbReference type="HOGENOM" id="CLU_166693_0_0_9"/>
<dbReference type="OrthoDB" id="1649074at2"/>
<dbReference type="PhylomeDB" id="P59154"/>
<dbReference type="Proteomes" id="UP000002512">
    <property type="component" value="Chromosome"/>
</dbReference>
<dbReference type="Gene3D" id="1.10.220.80">
    <property type="entry name" value="BH2638-like"/>
    <property type="match status" value="1"/>
</dbReference>
<dbReference type="HAMAP" id="MF_01041">
    <property type="entry name" value="UPF0223"/>
    <property type="match status" value="1"/>
</dbReference>
<dbReference type="InterPro" id="IPR023324">
    <property type="entry name" value="BH2638-like_sf"/>
</dbReference>
<dbReference type="InterPro" id="IPR007920">
    <property type="entry name" value="UPF0223"/>
</dbReference>
<dbReference type="NCBIfam" id="NF003353">
    <property type="entry name" value="PRK04387.1"/>
    <property type="match status" value="1"/>
</dbReference>
<dbReference type="Pfam" id="PF05256">
    <property type="entry name" value="UPF0223"/>
    <property type="match status" value="1"/>
</dbReference>
<dbReference type="PIRSF" id="PIRSF037260">
    <property type="entry name" value="UPF0223"/>
    <property type="match status" value="1"/>
</dbReference>
<dbReference type="SUPFAM" id="SSF158504">
    <property type="entry name" value="BH2638-like"/>
    <property type="match status" value="1"/>
</dbReference>
<gene>
    <name type="ordered locus">SMU_1141c</name>
</gene>
<name>Y1141_STRMU</name>
<keyword id="KW-1185">Reference proteome</keyword>
<reference key="1">
    <citation type="journal article" date="2002" name="Proc. Natl. Acad. Sci. U.S.A.">
        <title>Genome sequence of Streptococcus mutans UA159, a cariogenic dental pathogen.</title>
        <authorList>
            <person name="Ajdic D.J."/>
            <person name="McShan W.M."/>
            <person name="McLaughlin R.E."/>
            <person name="Savic G."/>
            <person name="Chang J."/>
            <person name="Carson M.B."/>
            <person name="Primeaux C."/>
            <person name="Tian R."/>
            <person name="Kenton S."/>
            <person name="Jia H.G."/>
            <person name="Lin S.P."/>
            <person name="Qian Y."/>
            <person name="Li S."/>
            <person name="Zhu H."/>
            <person name="Najar F.Z."/>
            <person name="Lai H."/>
            <person name="White J."/>
            <person name="Roe B.A."/>
            <person name="Ferretti J.J."/>
        </authorList>
    </citation>
    <scope>NUCLEOTIDE SEQUENCE [LARGE SCALE GENOMIC DNA]</scope>
    <source>
        <strain>ATCC 700610 / UA159</strain>
    </source>
</reference>
<organism>
    <name type="scientific">Streptococcus mutans serotype c (strain ATCC 700610 / UA159)</name>
    <dbReference type="NCBI Taxonomy" id="210007"/>
    <lineage>
        <taxon>Bacteria</taxon>
        <taxon>Bacillati</taxon>
        <taxon>Bacillota</taxon>
        <taxon>Bacilli</taxon>
        <taxon>Lactobacillales</taxon>
        <taxon>Streptococcaceae</taxon>
        <taxon>Streptococcus</taxon>
    </lineage>
</organism>
<feature type="chain" id="PRO_0000216695" description="UPF0223 protein SMU_1141c">
    <location>
        <begin position="1"/>
        <end position="92"/>
    </location>
</feature>
<comment type="similarity">
    <text evidence="1">Belongs to the UPF0223 family.</text>
</comment>
<evidence type="ECO:0000305" key="1"/>
<proteinExistence type="inferred from homology"/>
<protein>
    <recommendedName>
        <fullName>UPF0223 protein SMU_1141c</fullName>
    </recommendedName>
</protein>
<accession>P59154</accession>